<reference key="1">
    <citation type="journal article" date="2009" name="PLoS ONE">
        <title>Genome sequence of the pathogenic intestinal spirochete Brachyspira hyodysenteriae reveals adaptations to its lifestyle in the porcine large intestine.</title>
        <authorList>
            <person name="Bellgard M.I."/>
            <person name="Wanchanthuek P."/>
            <person name="La T."/>
            <person name="Ryan K."/>
            <person name="Moolhuijzen P."/>
            <person name="Albertyn Z."/>
            <person name="Shaban B."/>
            <person name="Motro Y."/>
            <person name="Dunn D.S."/>
            <person name="Schibeci D."/>
            <person name="Hunter A."/>
            <person name="Barrero R."/>
            <person name="Phillips N.D."/>
            <person name="Hampson D.J."/>
        </authorList>
    </citation>
    <scope>NUCLEOTIDE SEQUENCE [LARGE SCALE GENOMIC DNA]</scope>
    <source>
        <strain>ATCC 49526 / WA1</strain>
    </source>
</reference>
<evidence type="ECO:0000255" key="1">
    <source>
        <dbReference type="HAMAP-Rule" id="MF_01151"/>
    </source>
</evidence>
<evidence type="ECO:0000256" key="2">
    <source>
        <dbReference type="SAM" id="MobiDB-lite"/>
    </source>
</evidence>
<sequence length="200" mass="22754">MEEEIKETSEDKEEENTEAEAVENNEKSEENAGNVEEDEITALKKRIEELENESADMKNKYMYAMAEAENIRKRTAKEKADSIKRANKGLLLSLLTFMDNFERALKAGEQDSNVQGSEYYKGIELIHKQFIDFMHDNGVSEIESLGEEFDPNVHEALTMIEVPDIDKEKVVEVYAKGYKLNDELLRTAKVVVGKPAAAKE</sequence>
<keyword id="KW-0143">Chaperone</keyword>
<keyword id="KW-0963">Cytoplasm</keyword>
<keyword id="KW-0346">Stress response</keyword>
<feature type="chain" id="PRO_1000164180" description="Protein GrpE">
    <location>
        <begin position="1"/>
        <end position="200"/>
    </location>
</feature>
<feature type="region of interest" description="Disordered" evidence="2">
    <location>
        <begin position="1"/>
        <end position="39"/>
    </location>
</feature>
<feature type="compositionally biased region" description="Acidic residues" evidence="2">
    <location>
        <begin position="1"/>
        <end position="23"/>
    </location>
</feature>
<comment type="function">
    <text evidence="1">Participates actively in the response to hyperosmotic and heat shock by preventing the aggregation of stress-denatured proteins, in association with DnaK and GrpE. It is the nucleotide exchange factor for DnaK and may function as a thermosensor. Unfolded proteins bind initially to DnaJ; upon interaction with the DnaJ-bound protein, DnaK hydrolyzes its bound ATP, resulting in the formation of a stable complex. GrpE releases ADP from DnaK; ATP binding to DnaK triggers the release of the substrate protein, thus completing the reaction cycle. Several rounds of ATP-dependent interactions between DnaJ, DnaK and GrpE are required for fully efficient folding.</text>
</comment>
<comment type="subunit">
    <text evidence="1">Homodimer.</text>
</comment>
<comment type="subcellular location">
    <subcellularLocation>
        <location evidence="1">Cytoplasm</location>
    </subcellularLocation>
</comment>
<comment type="similarity">
    <text evidence="1">Belongs to the GrpE family.</text>
</comment>
<accession>C0QX60</accession>
<protein>
    <recommendedName>
        <fullName evidence="1">Protein GrpE</fullName>
    </recommendedName>
    <alternativeName>
        <fullName evidence="1">HSP-70 cofactor</fullName>
    </alternativeName>
</protein>
<dbReference type="EMBL" id="CP001357">
    <property type="protein sequence ID" value="ACN82718.1"/>
    <property type="molecule type" value="Genomic_DNA"/>
</dbReference>
<dbReference type="RefSeq" id="WP_012669771.1">
    <property type="nucleotide sequence ID" value="NC_012225.1"/>
</dbReference>
<dbReference type="SMR" id="C0QX60"/>
<dbReference type="STRING" id="565034.BHWA1_00218"/>
<dbReference type="GeneID" id="63961343"/>
<dbReference type="KEGG" id="bhy:BHWA1_00218"/>
<dbReference type="eggNOG" id="COG0576">
    <property type="taxonomic scope" value="Bacteria"/>
</dbReference>
<dbReference type="HOGENOM" id="CLU_057217_5_2_12"/>
<dbReference type="Proteomes" id="UP000001803">
    <property type="component" value="Chromosome"/>
</dbReference>
<dbReference type="GO" id="GO:0005737">
    <property type="term" value="C:cytoplasm"/>
    <property type="evidence" value="ECO:0007669"/>
    <property type="project" value="UniProtKB-SubCell"/>
</dbReference>
<dbReference type="GO" id="GO:0000774">
    <property type="term" value="F:adenyl-nucleotide exchange factor activity"/>
    <property type="evidence" value="ECO:0007669"/>
    <property type="project" value="InterPro"/>
</dbReference>
<dbReference type="GO" id="GO:0042803">
    <property type="term" value="F:protein homodimerization activity"/>
    <property type="evidence" value="ECO:0007669"/>
    <property type="project" value="InterPro"/>
</dbReference>
<dbReference type="GO" id="GO:0051087">
    <property type="term" value="F:protein-folding chaperone binding"/>
    <property type="evidence" value="ECO:0007669"/>
    <property type="project" value="InterPro"/>
</dbReference>
<dbReference type="GO" id="GO:0051082">
    <property type="term" value="F:unfolded protein binding"/>
    <property type="evidence" value="ECO:0007669"/>
    <property type="project" value="TreeGrafter"/>
</dbReference>
<dbReference type="GO" id="GO:0006457">
    <property type="term" value="P:protein folding"/>
    <property type="evidence" value="ECO:0007669"/>
    <property type="project" value="InterPro"/>
</dbReference>
<dbReference type="CDD" id="cd00446">
    <property type="entry name" value="GrpE"/>
    <property type="match status" value="1"/>
</dbReference>
<dbReference type="FunFam" id="2.30.22.10:FF:000001">
    <property type="entry name" value="Protein GrpE"/>
    <property type="match status" value="1"/>
</dbReference>
<dbReference type="Gene3D" id="3.90.20.20">
    <property type="match status" value="1"/>
</dbReference>
<dbReference type="Gene3D" id="2.30.22.10">
    <property type="entry name" value="Head domain of nucleotide exchange factor GrpE"/>
    <property type="match status" value="1"/>
</dbReference>
<dbReference type="HAMAP" id="MF_01151">
    <property type="entry name" value="GrpE"/>
    <property type="match status" value="1"/>
</dbReference>
<dbReference type="InterPro" id="IPR000740">
    <property type="entry name" value="GrpE"/>
</dbReference>
<dbReference type="InterPro" id="IPR013805">
    <property type="entry name" value="GrpE_coiled_coil"/>
</dbReference>
<dbReference type="InterPro" id="IPR009012">
    <property type="entry name" value="GrpE_head"/>
</dbReference>
<dbReference type="PANTHER" id="PTHR21237">
    <property type="entry name" value="GRPE PROTEIN"/>
    <property type="match status" value="1"/>
</dbReference>
<dbReference type="PANTHER" id="PTHR21237:SF23">
    <property type="entry name" value="GRPE PROTEIN HOMOLOG, MITOCHONDRIAL"/>
    <property type="match status" value="1"/>
</dbReference>
<dbReference type="Pfam" id="PF01025">
    <property type="entry name" value="GrpE"/>
    <property type="match status" value="1"/>
</dbReference>
<dbReference type="PRINTS" id="PR00773">
    <property type="entry name" value="GRPEPROTEIN"/>
</dbReference>
<dbReference type="SUPFAM" id="SSF58014">
    <property type="entry name" value="Coiled-coil domain of nucleotide exchange factor GrpE"/>
    <property type="match status" value="1"/>
</dbReference>
<dbReference type="SUPFAM" id="SSF51064">
    <property type="entry name" value="Head domain of nucleotide exchange factor GrpE"/>
    <property type="match status" value="1"/>
</dbReference>
<dbReference type="PROSITE" id="PS01071">
    <property type="entry name" value="GRPE"/>
    <property type="match status" value="1"/>
</dbReference>
<organism>
    <name type="scientific">Brachyspira hyodysenteriae (strain ATCC 49526 / WA1)</name>
    <dbReference type="NCBI Taxonomy" id="565034"/>
    <lineage>
        <taxon>Bacteria</taxon>
        <taxon>Pseudomonadati</taxon>
        <taxon>Spirochaetota</taxon>
        <taxon>Spirochaetia</taxon>
        <taxon>Brachyspirales</taxon>
        <taxon>Brachyspiraceae</taxon>
        <taxon>Brachyspira</taxon>
    </lineage>
</organism>
<name>GRPE_BRAHW</name>
<proteinExistence type="inferred from homology"/>
<gene>
    <name evidence="1" type="primary">grpE</name>
    <name type="ordered locus">BHWA1_00218</name>
</gene>